<gene>
    <name type="primary">zcchc4</name>
</gene>
<name>ZCHC4_XENLA</name>
<dbReference type="EC" id="2.1.1.-" evidence="1"/>
<dbReference type="EMBL" id="BC078110">
    <property type="protein sequence ID" value="AAH78110.1"/>
    <property type="molecule type" value="mRNA"/>
</dbReference>
<dbReference type="RefSeq" id="NP_001087167.1">
    <property type="nucleotide sequence ID" value="NM_001093698.1"/>
</dbReference>
<dbReference type="SMR" id="Q6DCD7"/>
<dbReference type="DNASU" id="447056"/>
<dbReference type="GeneID" id="447056"/>
<dbReference type="KEGG" id="xla:447056"/>
<dbReference type="AGR" id="Xenbase:XB-GENE-1007158"/>
<dbReference type="CTD" id="447056"/>
<dbReference type="Xenbase" id="XB-GENE-1007158">
    <property type="gene designation" value="zcchc4.S"/>
</dbReference>
<dbReference type="OMA" id="FPYFMEH"/>
<dbReference type="OrthoDB" id="431817at2759"/>
<dbReference type="Proteomes" id="UP000186698">
    <property type="component" value="Chromosome 1S"/>
</dbReference>
<dbReference type="Bgee" id="447056">
    <property type="expression patterns" value="Expressed in egg cell and 19 other cell types or tissues"/>
</dbReference>
<dbReference type="GO" id="GO:0005737">
    <property type="term" value="C:cytoplasm"/>
    <property type="evidence" value="ECO:0000250"/>
    <property type="project" value="UniProtKB"/>
</dbReference>
<dbReference type="GO" id="GO:0005730">
    <property type="term" value="C:nucleolus"/>
    <property type="evidence" value="ECO:0000250"/>
    <property type="project" value="UniProtKB"/>
</dbReference>
<dbReference type="GO" id="GO:0003676">
    <property type="term" value="F:nucleic acid binding"/>
    <property type="evidence" value="ECO:0007669"/>
    <property type="project" value="InterPro"/>
</dbReference>
<dbReference type="GO" id="GO:0008988">
    <property type="term" value="F:rRNA (adenine-N6-)-methyltransferase activity"/>
    <property type="evidence" value="ECO:0000250"/>
    <property type="project" value="UniProtKB"/>
</dbReference>
<dbReference type="GO" id="GO:1904047">
    <property type="term" value="F:S-adenosyl-L-methionine binding"/>
    <property type="evidence" value="ECO:0000250"/>
    <property type="project" value="UniProtKB"/>
</dbReference>
<dbReference type="GO" id="GO:0008270">
    <property type="term" value="F:zinc ion binding"/>
    <property type="evidence" value="ECO:0000250"/>
    <property type="project" value="UniProtKB"/>
</dbReference>
<dbReference type="GO" id="GO:0045727">
    <property type="term" value="P:positive regulation of translation"/>
    <property type="evidence" value="ECO:0000250"/>
    <property type="project" value="UniProtKB"/>
</dbReference>
<dbReference type="GO" id="GO:0031167">
    <property type="term" value="P:rRNA methylation"/>
    <property type="evidence" value="ECO:0000250"/>
    <property type="project" value="UniProtKB"/>
</dbReference>
<dbReference type="InterPro" id="IPR002052">
    <property type="entry name" value="DNA_methylase_N6_adenine_CS"/>
</dbReference>
<dbReference type="InterPro" id="IPR041370">
    <property type="entry name" value="Mlase_EEF1AKMT1/ZCCHC4"/>
</dbReference>
<dbReference type="InterPro" id="IPR039846">
    <property type="entry name" value="ZCCHC4"/>
</dbReference>
<dbReference type="InterPro" id="IPR001878">
    <property type="entry name" value="Znf_CCHC"/>
</dbReference>
<dbReference type="InterPro" id="IPR010666">
    <property type="entry name" value="Znf_GRF"/>
</dbReference>
<dbReference type="PANTHER" id="PTHR13493:SF3">
    <property type="entry name" value="RRNA N6-ADENOSINE-METHYLTRANSFERASE ZCCHC4"/>
    <property type="match status" value="1"/>
</dbReference>
<dbReference type="PANTHER" id="PTHR13493">
    <property type="entry name" value="ZINC FINGER CCHC DOMAIN-CONTAINING"/>
    <property type="match status" value="1"/>
</dbReference>
<dbReference type="Pfam" id="PF10237">
    <property type="entry name" value="N6-adenineMlase"/>
    <property type="match status" value="1"/>
</dbReference>
<dbReference type="Pfam" id="PF06839">
    <property type="entry name" value="Zn_ribbon_GRF"/>
    <property type="match status" value="1"/>
</dbReference>
<dbReference type="PROSITE" id="PS50216">
    <property type="entry name" value="DHHC"/>
    <property type="match status" value="1"/>
</dbReference>
<dbReference type="PROSITE" id="PS00092">
    <property type="entry name" value="N6_MTASE"/>
    <property type="match status" value="1"/>
</dbReference>
<dbReference type="PROSITE" id="PS50158">
    <property type="entry name" value="ZF_CCHC"/>
    <property type="match status" value="1"/>
</dbReference>
<dbReference type="PROSITE" id="PS51999">
    <property type="entry name" value="ZF_GRF"/>
    <property type="match status" value="1"/>
</dbReference>
<reference key="1">
    <citation type="submission" date="2004-07" db="EMBL/GenBank/DDBJ databases">
        <authorList>
            <consortium name="NIH - Xenopus Gene Collection (XGC) project"/>
        </authorList>
    </citation>
    <scope>NUCLEOTIDE SEQUENCE [LARGE SCALE MRNA]</scope>
    <source>
        <tissue>Oocyte</tissue>
    </source>
</reference>
<feature type="chain" id="PRO_0000150954" description="rRNA N(6)-adenosine-methyltransferase ZCCHC4">
    <location>
        <begin position="1"/>
        <end position="489"/>
    </location>
</feature>
<feature type="domain" description="DHHC" evidence="3">
    <location>
        <begin position="381"/>
        <end position="431"/>
    </location>
</feature>
<feature type="zinc finger region" description="GRF-type" evidence="4">
    <location>
        <begin position="28"/>
        <end position="70"/>
    </location>
</feature>
<feature type="zinc finger region" description="CCHC-type" evidence="2">
    <location>
        <begin position="429"/>
        <end position="446"/>
    </location>
</feature>
<feature type="region of interest" description="Regulatory loop" evidence="1">
    <location>
        <begin position="323"/>
        <end position="343"/>
    </location>
</feature>
<feature type="region of interest" description="Disordered" evidence="5">
    <location>
        <begin position="455"/>
        <end position="489"/>
    </location>
</feature>
<feature type="compositionally biased region" description="Basic residues" evidence="5">
    <location>
        <begin position="478"/>
        <end position="489"/>
    </location>
</feature>
<feature type="binding site" evidence="4">
    <location>
        <position position="28"/>
    </location>
    <ligand>
        <name>Zn(2+)</name>
        <dbReference type="ChEBI" id="CHEBI:29105"/>
        <label>1</label>
    </ligand>
</feature>
<feature type="binding site" evidence="4">
    <location>
        <position position="30"/>
    </location>
    <ligand>
        <name>Zn(2+)</name>
        <dbReference type="ChEBI" id="CHEBI:29105"/>
        <label>1</label>
    </ligand>
</feature>
<feature type="binding site" evidence="4">
    <location>
        <position position="52"/>
    </location>
    <ligand>
        <name>Zn(2+)</name>
        <dbReference type="ChEBI" id="CHEBI:29105"/>
        <label>1</label>
    </ligand>
</feature>
<feature type="binding site" evidence="4">
    <location>
        <position position="61"/>
    </location>
    <ligand>
        <name>Zn(2+)</name>
        <dbReference type="ChEBI" id="CHEBI:29105"/>
        <label>1</label>
    </ligand>
</feature>
<feature type="binding site" evidence="1">
    <location>
        <position position="113"/>
    </location>
    <ligand>
        <name>Zn(2+)</name>
        <dbReference type="ChEBI" id="CHEBI:29105"/>
        <label>2</label>
    </ligand>
</feature>
<feature type="binding site" evidence="1">
    <location>
        <position position="116"/>
    </location>
    <ligand>
        <name>Zn(2+)</name>
        <dbReference type="ChEBI" id="CHEBI:29105"/>
        <label>2</label>
    </ligand>
</feature>
<feature type="binding site" evidence="1">
    <location>
        <position position="128"/>
    </location>
    <ligand>
        <name>Zn(2+)</name>
        <dbReference type="ChEBI" id="CHEBI:29105"/>
        <label>2</label>
    </ligand>
</feature>
<feature type="binding site" evidence="1">
    <location>
        <position position="131"/>
    </location>
    <ligand>
        <name>Zn(2+)</name>
        <dbReference type="ChEBI" id="CHEBI:29105"/>
        <label>2</label>
    </ligand>
</feature>
<feature type="binding site" evidence="1">
    <location>
        <begin position="160"/>
        <end position="163"/>
    </location>
    <ligand>
        <name>S-adenosyl-L-methionine</name>
        <dbReference type="ChEBI" id="CHEBI:59789"/>
    </ligand>
</feature>
<feature type="binding site" evidence="1">
    <location>
        <position position="190"/>
    </location>
    <ligand>
        <name>S-adenosyl-L-methionine</name>
        <dbReference type="ChEBI" id="CHEBI:59789"/>
    </ligand>
</feature>
<feature type="binding site" evidence="1">
    <location>
        <position position="213"/>
    </location>
    <ligand>
        <name>S-adenosyl-L-methionine</name>
        <dbReference type="ChEBI" id="CHEBI:59789"/>
    </ligand>
</feature>
<feature type="binding site" evidence="1">
    <location>
        <begin position="231"/>
        <end position="232"/>
    </location>
    <ligand>
        <name>S-adenosyl-L-methionine</name>
        <dbReference type="ChEBI" id="CHEBI:59789"/>
    </ligand>
</feature>
<feature type="binding site" evidence="1">
    <location>
        <position position="264"/>
    </location>
    <ligand>
        <name>S-adenosyl-L-methionine</name>
        <dbReference type="ChEBI" id="CHEBI:59789"/>
    </ligand>
</feature>
<feature type="binding site" evidence="1">
    <location>
        <position position="366"/>
    </location>
    <ligand>
        <name>Zn(2+)</name>
        <dbReference type="ChEBI" id="CHEBI:29105"/>
        <label>3</label>
    </ligand>
</feature>
<feature type="binding site" evidence="1">
    <location>
        <position position="369"/>
    </location>
    <ligand>
        <name>Zn(2+)</name>
        <dbReference type="ChEBI" id="CHEBI:29105"/>
        <label>3</label>
    </ligand>
</feature>
<feature type="binding site" evidence="1">
    <location>
        <position position="379"/>
    </location>
    <ligand>
        <name>Zn(2+)</name>
        <dbReference type="ChEBI" id="CHEBI:29105"/>
        <label>3</label>
    </ligand>
</feature>
<feature type="binding site" evidence="1">
    <location>
        <position position="380"/>
    </location>
    <ligand>
        <name>Zn(2+)</name>
        <dbReference type="ChEBI" id="CHEBI:29105"/>
        <label>4</label>
    </ligand>
</feature>
<feature type="binding site" evidence="1">
    <location>
        <position position="383"/>
    </location>
    <ligand>
        <name>Zn(2+)</name>
        <dbReference type="ChEBI" id="CHEBI:29105"/>
        <label>4</label>
    </ligand>
</feature>
<feature type="binding site" evidence="1">
    <location>
        <position position="386"/>
    </location>
    <ligand>
        <name>Zn(2+)</name>
        <dbReference type="ChEBI" id="CHEBI:29105"/>
        <label>3</label>
    </ligand>
</feature>
<feature type="binding site" evidence="1">
    <location>
        <position position="396"/>
    </location>
    <ligand>
        <name>Zn(2+)</name>
        <dbReference type="ChEBI" id="CHEBI:29105"/>
        <label>4</label>
    </ligand>
</feature>
<feature type="binding site" evidence="1">
    <location>
        <position position="397"/>
    </location>
    <ligand>
        <name>Zn(2+)</name>
        <dbReference type="ChEBI" id="CHEBI:29105"/>
        <label>5</label>
    </ligand>
</feature>
<feature type="binding site" evidence="1">
    <location>
        <position position="400"/>
    </location>
    <ligand>
        <name>Zn(2+)</name>
        <dbReference type="ChEBI" id="CHEBI:29105"/>
        <label>5</label>
    </ligand>
</feature>
<feature type="binding site" evidence="1">
    <location>
        <position position="403"/>
    </location>
    <ligand>
        <name>Zn(2+)</name>
        <dbReference type="ChEBI" id="CHEBI:29105"/>
        <label>4</label>
    </ligand>
</feature>
<feature type="binding site" evidence="1">
    <location>
        <position position="410"/>
    </location>
    <ligand>
        <name>Zn(2+)</name>
        <dbReference type="ChEBI" id="CHEBI:29105"/>
        <label>5</label>
    </ligand>
</feature>
<feature type="binding site" evidence="1">
    <location>
        <position position="411"/>
    </location>
    <ligand>
        <name>Zn(2+)</name>
        <dbReference type="ChEBI" id="CHEBI:29105"/>
        <label>6</label>
    </ligand>
</feature>
<feature type="binding site" evidence="1">
    <location>
        <position position="414"/>
    </location>
    <ligand>
        <name>Zn(2+)</name>
        <dbReference type="ChEBI" id="CHEBI:29105"/>
        <label>6</label>
    </ligand>
</feature>
<feature type="binding site" evidence="1">
    <location>
        <position position="417"/>
    </location>
    <ligand>
        <name>Zn(2+)</name>
        <dbReference type="ChEBI" id="CHEBI:29105"/>
        <label>5</label>
    </ligand>
</feature>
<feature type="binding site" evidence="1">
    <location>
        <position position="422"/>
    </location>
    <ligand>
        <name>Zn(2+)</name>
        <dbReference type="ChEBI" id="CHEBI:29105"/>
        <label>6</label>
    </ligand>
</feature>
<feature type="binding site" evidence="1">
    <location>
        <position position="424"/>
    </location>
    <ligand>
        <name>Zn(2+)</name>
        <dbReference type="ChEBI" id="CHEBI:29105"/>
        <label>6</label>
    </ligand>
</feature>
<accession>Q6DCD7</accession>
<evidence type="ECO:0000250" key="1">
    <source>
        <dbReference type="UniProtKB" id="Q9H5U6"/>
    </source>
</evidence>
<evidence type="ECO:0000255" key="2">
    <source>
        <dbReference type="PROSITE-ProRule" id="PRU00047"/>
    </source>
</evidence>
<evidence type="ECO:0000255" key="3">
    <source>
        <dbReference type="PROSITE-ProRule" id="PRU00067"/>
    </source>
</evidence>
<evidence type="ECO:0000255" key="4">
    <source>
        <dbReference type="PROSITE-ProRule" id="PRU01343"/>
    </source>
</evidence>
<evidence type="ECO:0000256" key="5">
    <source>
        <dbReference type="SAM" id="MobiDB-lite"/>
    </source>
</evidence>
<evidence type="ECO:0000305" key="6"/>
<keyword id="KW-0963">Cytoplasm</keyword>
<keyword id="KW-0479">Metal-binding</keyword>
<keyword id="KW-0489">Methyltransferase</keyword>
<keyword id="KW-0539">Nucleus</keyword>
<keyword id="KW-1185">Reference proteome</keyword>
<keyword id="KW-0949">S-adenosyl-L-methionine</keyword>
<keyword id="KW-0808">Transferase</keyword>
<keyword id="KW-0862">Zinc</keyword>
<keyword id="KW-0863">Zinc-finger</keyword>
<proteinExistence type="evidence at transcript level"/>
<organism>
    <name type="scientific">Xenopus laevis</name>
    <name type="common">African clawed frog</name>
    <dbReference type="NCBI Taxonomy" id="8355"/>
    <lineage>
        <taxon>Eukaryota</taxon>
        <taxon>Metazoa</taxon>
        <taxon>Chordata</taxon>
        <taxon>Craniata</taxon>
        <taxon>Vertebrata</taxon>
        <taxon>Euteleostomi</taxon>
        <taxon>Amphibia</taxon>
        <taxon>Batrachia</taxon>
        <taxon>Anura</taxon>
        <taxon>Pipoidea</taxon>
        <taxon>Pipidae</taxon>
        <taxon>Xenopodinae</taxon>
        <taxon>Xenopus</taxon>
        <taxon>Xenopus</taxon>
    </lineage>
</organism>
<sequence>MEAAEGSENYDGIQVLLSREVIDTAPQCPHGPTLLFVKVSQGKEQGRRFYACSACRDRKDCHFFQWEDEKVSQARLAAREEYNKSHQPPMTHAEYARSFQEFTALPLAKRKFCCDCQQLLLQTNWETHSRHRVLGDISLSQLKRPSQLLHPLENKKANAQYLFADRSCTFLLDTIIALGFRRVLCVGTPRLHELIKLRACKGTTPPIKSLLLDIDFRYSQFYSEEEFSHYNMFNHHFFGGEAAKLVCQKFLQEEDGNGALLVTDPPFGGLVEPLAFSFKRLREMWKDSNPENANNLPIFWMFPYFFESRILQCFPDFAMLDYQVDYDNHALYKHGKTGRKQSPVRIFTDLPLDKIVLPASEGYRFCSVCERFVCSENKHCDICNRCTSKDGRSWKHCSQCKKCVKPSWSHCSACNHCALPGHPCGTAGDGCFLCGGKGHKRRGCPHLSVSADGERMKRNLKQRSIKGNMKKQPTATTSKKKKRKRNNPC</sequence>
<comment type="function">
    <text evidence="1">rRNA N6-methyltransferase that specifically methylates the adenine in position 4220 of 28S rRNA. N6-methylation of adenine(4220) in 28S rRNA is required for translation.</text>
</comment>
<comment type="catalytic activity">
    <reaction evidence="1">
        <text>adenosine(4220) in 28S rRNA + S-adenosyl-L-methionine = N(6)-methyladenosine(4220) in 28S rRNA + S-adenosyl-L-homocysteine + H(+)</text>
        <dbReference type="Rhea" id="RHEA:58724"/>
        <dbReference type="Rhea" id="RHEA-COMP:16142"/>
        <dbReference type="Rhea" id="RHEA-COMP:16143"/>
        <dbReference type="ChEBI" id="CHEBI:15378"/>
        <dbReference type="ChEBI" id="CHEBI:57856"/>
        <dbReference type="ChEBI" id="CHEBI:59789"/>
        <dbReference type="ChEBI" id="CHEBI:74411"/>
        <dbReference type="ChEBI" id="CHEBI:74449"/>
    </reaction>
</comment>
<comment type="subcellular location">
    <subcellularLocation>
        <location evidence="1">Cytoplasm</location>
    </subcellularLocation>
    <subcellularLocation>
        <location evidence="1">Nucleus</location>
        <location evidence="1">Nucleolus</location>
    </subcellularLocation>
    <text evidence="1">Accumulates in the nucleolus, where ribosome biogenesis takes place.</text>
</comment>
<comment type="domain">
    <text evidence="1">The regulatory loop blocks the catalytic center by bridging the methyltransferase domain and the C-terminal CCHC-type zinc finger, resulting in an autoinhibitory conformation.</text>
</comment>
<comment type="similarity">
    <text evidence="6">Belongs to the ZCCHC4 family.</text>
</comment>
<protein>
    <recommendedName>
        <fullName evidence="6">rRNA N(6)-adenosine-methyltransferase ZCCHC4</fullName>
        <ecNumber evidence="1">2.1.1.-</ecNumber>
    </recommendedName>
    <alternativeName>
        <fullName evidence="6">Zinc finger CCHC domain-containing protein 4</fullName>
    </alternativeName>
</protein>